<sequence>MKNLLSMEALTVHEIEHLLEQAAQFKHGKKATLKEQAFAVNMFFEPSTRTHTSFEVAEKKLGVEVVSFDAATSSMTKGETLYDTLLTMEAVGVNVAVIRHSEENYYAGLDKLNIAIVNGGDGCGEHPSQSLLDLFTIKEQFGTFQDLKVAIAGDIRHSRVANSNMKVLKRLGAKLFFSGPKEWFDDSYLEYGTYLPVDEIVEKVDVMMLLRVQHERHSGTEQFTKASYHEKFGLTVERAAKLKQDAIIMHPSPVNRDVEIADSLVESEKSRIVTQMTNGVFIRMAILESILKEQEMRAKVCTY</sequence>
<reference key="1">
    <citation type="journal article" date="2001" name="Science">
        <title>Comparative genomics of Listeria species.</title>
        <authorList>
            <person name="Glaser P."/>
            <person name="Frangeul L."/>
            <person name="Buchrieser C."/>
            <person name="Rusniok C."/>
            <person name="Amend A."/>
            <person name="Baquero F."/>
            <person name="Berche P."/>
            <person name="Bloecker H."/>
            <person name="Brandt P."/>
            <person name="Chakraborty T."/>
            <person name="Charbit A."/>
            <person name="Chetouani F."/>
            <person name="Couve E."/>
            <person name="de Daruvar A."/>
            <person name="Dehoux P."/>
            <person name="Domann E."/>
            <person name="Dominguez-Bernal G."/>
            <person name="Duchaud E."/>
            <person name="Durant L."/>
            <person name="Dussurget O."/>
            <person name="Entian K.-D."/>
            <person name="Fsihi H."/>
            <person name="Garcia-del Portillo F."/>
            <person name="Garrido P."/>
            <person name="Gautier L."/>
            <person name="Goebel W."/>
            <person name="Gomez-Lopez N."/>
            <person name="Hain T."/>
            <person name="Hauf J."/>
            <person name="Jackson D."/>
            <person name="Jones L.-M."/>
            <person name="Kaerst U."/>
            <person name="Kreft J."/>
            <person name="Kuhn M."/>
            <person name="Kunst F."/>
            <person name="Kurapkat G."/>
            <person name="Madueno E."/>
            <person name="Maitournam A."/>
            <person name="Mata Vicente J."/>
            <person name="Ng E."/>
            <person name="Nedjari H."/>
            <person name="Nordsiek G."/>
            <person name="Novella S."/>
            <person name="de Pablos B."/>
            <person name="Perez-Diaz J.-C."/>
            <person name="Purcell R."/>
            <person name="Remmel B."/>
            <person name="Rose M."/>
            <person name="Schlueter T."/>
            <person name="Simoes N."/>
            <person name="Tierrez A."/>
            <person name="Vazquez-Boland J.-A."/>
            <person name="Voss H."/>
            <person name="Wehland J."/>
            <person name="Cossart P."/>
        </authorList>
    </citation>
    <scope>NUCLEOTIDE SEQUENCE [LARGE SCALE GENOMIC DNA]</scope>
    <source>
        <strain>ATCC BAA-680 / CLIP 11262</strain>
    </source>
</reference>
<organism>
    <name type="scientific">Listeria innocua serovar 6a (strain ATCC BAA-680 / CLIP 11262)</name>
    <dbReference type="NCBI Taxonomy" id="272626"/>
    <lineage>
        <taxon>Bacteria</taxon>
        <taxon>Bacillati</taxon>
        <taxon>Bacillota</taxon>
        <taxon>Bacilli</taxon>
        <taxon>Bacillales</taxon>
        <taxon>Listeriaceae</taxon>
        <taxon>Listeria</taxon>
    </lineage>
</organism>
<dbReference type="EC" id="2.1.3.2" evidence="1"/>
<dbReference type="EMBL" id="AL596170">
    <property type="protein sequence ID" value="CAC97182.1"/>
    <property type="molecule type" value="Genomic_DNA"/>
</dbReference>
<dbReference type="PIR" id="AF1676">
    <property type="entry name" value="AF1676"/>
</dbReference>
<dbReference type="RefSeq" id="WP_010991679.1">
    <property type="nucleotide sequence ID" value="NC_003212.1"/>
</dbReference>
<dbReference type="SMR" id="Q92AH0"/>
<dbReference type="STRING" id="272626.gene:17566310"/>
<dbReference type="GeneID" id="93235290"/>
<dbReference type="KEGG" id="lin:pyrB"/>
<dbReference type="eggNOG" id="COG0540">
    <property type="taxonomic scope" value="Bacteria"/>
</dbReference>
<dbReference type="HOGENOM" id="CLU_043846_2_1_9"/>
<dbReference type="OrthoDB" id="9774690at2"/>
<dbReference type="UniPathway" id="UPA00070">
    <property type="reaction ID" value="UER00116"/>
</dbReference>
<dbReference type="Proteomes" id="UP000002513">
    <property type="component" value="Chromosome"/>
</dbReference>
<dbReference type="GO" id="GO:0005829">
    <property type="term" value="C:cytosol"/>
    <property type="evidence" value="ECO:0007669"/>
    <property type="project" value="TreeGrafter"/>
</dbReference>
<dbReference type="GO" id="GO:0016597">
    <property type="term" value="F:amino acid binding"/>
    <property type="evidence" value="ECO:0007669"/>
    <property type="project" value="InterPro"/>
</dbReference>
<dbReference type="GO" id="GO:0004070">
    <property type="term" value="F:aspartate carbamoyltransferase activity"/>
    <property type="evidence" value="ECO:0007669"/>
    <property type="project" value="UniProtKB-UniRule"/>
</dbReference>
<dbReference type="GO" id="GO:0006207">
    <property type="term" value="P:'de novo' pyrimidine nucleobase biosynthetic process"/>
    <property type="evidence" value="ECO:0007669"/>
    <property type="project" value="InterPro"/>
</dbReference>
<dbReference type="GO" id="GO:0044205">
    <property type="term" value="P:'de novo' UMP biosynthetic process"/>
    <property type="evidence" value="ECO:0007669"/>
    <property type="project" value="UniProtKB-UniRule"/>
</dbReference>
<dbReference type="GO" id="GO:0006520">
    <property type="term" value="P:amino acid metabolic process"/>
    <property type="evidence" value="ECO:0007669"/>
    <property type="project" value="InterPro"/>
</dbReference>
<dbReference type="FunFam" id="3.40.50.1370:FF:000011">
    <property type="entry name" value="Aspartate carbamoyltransferase"/>
    <property type="match status" value="1"/>
</dbReference>
<dbReference type="Gene3D" id="3.40.50.1370">
    <property type="entry name" value="Aspartate/ornithine carbamoyltransferase"/>
    <property type="match status" value="2"/>
</dbReference>
<dbReference type="HAMAP" id="MF_00001">
    <property type="entry name" value="Asp_carb_tr"/>
    <property type="match status" value="1"/>
</dbReference>
<dbReference type="InterPro" id="IPR006132">
    <property type="entry name" value="Asp/Orn_carbamoyltranf_P-bd"/>
</dbReference>
<dbReference type="InterPro" id="IPR006130">
    <property type="entry name" value="Asp/Orn_carbamoylTrfase"/>
</dbReference>
<dbReference type="InterPro" id="IPR036901">
    <property type="entry name" value="Asp/Orn_carbamoylTrfase_sf"/>
</dbReference>
<dbReference type="InterPro" id="IPR002082">
    <property type="entry name" value="Asp_carbamoyltransf"/>
</dbReference>
<dbReference type="InterPro" id="IPR006131">
    <property type="entry name" value="Asp_carbamoyltransf_Asp/Orn-bd"/>
</dbReference>
<dbReference type="NCBIfam" id="TIGR00670">
    <property type="entry name" value="asp_carb_tr"/>
    <property type="match status" value="1"/>
</dbReference>
<dbReference type="NCBIfam" id="NF002032">
    <property type="entry name" value="PRK00856.1"/>
    <property type="match status" value="1"/>
</dbReference>
<dbReference type="PANTHER" id="PTHR45753:SF6">
    <property type="entry name" value="ASPARTATE CARBAMOYLTRANSFERASE"/>
    <property type="match status" value="1"/>
</dbReference>
<dbReference type="PANTHER" id="PTHR45753">
    <property type="entry name" value="ORNITHINE CARBAMOYLTRANSFERASE, MITOCHONDRIAL"/>
    <property type="match status" value="1"/>
</dbReference>
<dbReference type="Pfam" id="PF00185">
    <property type="entry name" value="OTCace"/>
    <property type="match status" value="1"/>
</dbReference>
<dbReference type="Pfam" id="PF02729">
    <property type="entry name" value="OTCace_N"/>
    <property type="match status" value="1"/>
</dbReference>
<dbReference type="PRINTS" id="PR00100">
    <property type="entry name" value="AOTCASE"/>
</dbReference>
<dbReference type="PRINTS" id="PR00101">
    <property type="entry name" value="ATCASE"/>
</dbReference>
<dbReference type="SUPFAM" id="SSF53671">
    <property type="entry name" value="Aspartate/ornithine carbamoyltransferase"/>
    <property type="match status" value="1"/>
</dbReference>
<dbReference type="PROSITE" id="PS00097">
    <property type="entry name" value="CARBAMOYLTRANSFERASE"/>
    <property type="match status" value="1"/>
</dbReference>
<gene>
    <name evidence="1" type="primary">pyrB</name>
    <name type="ordered locus">lin1952</name>
</gene>
<feature type="chain" id="PRO_0000113155" description="Aspartate carbamoyltransferase catalytic subunit">
    <location>
        <begin position="1"/>
        <end position="303"/>
    </location>
</feature>
<feature type="binding site" evidence="1">
    <location>
        <position position="49"/>
    </location>
    <ligand>
        <name>carbamoyl phosphate</name>
        <dbReference type="ChEBI" id="CHEBI:58228"/>
    </ligand>
</feature>
<feature type="binding site" evidence="1">
    <location>
        <position position="50"/>
    </location>
    <ligand>
        <name>carbamoyl phosphate</name>
        <dbReference type="ChEBI" id="CHEBI:58228"/>
    </ligand>
</feature>
<feature type="binding site" evidence="1">
    <location>
        <position position="77"/>
    </location>
    <ligand>
        <name>L-aspartate</name>
        <dbReference type="ChEBI" id="CHEBI:29991"/>
    </ligand>
</feature>
<feature type="binding site" evidence="1">
    <location>
        <position position="99"/>
    </location>
    <ligand>
        <name>carbamoyl phosphate</name>
        <dbReference type="ChEBI" id="CHEBI:58228"/>
    </ligand>
</feature>
<feature type="binding site" evidence="1">
    <location>
        <position position="126"/>
    </location>
    <ligand>
        <name>carbamoyl phosphate</name>
        <dbReference type="ChEBI" id="CHEBI:58228"/>
    </ligand>
</feature>
<feature type="binding site" evidence="1">
    <location>
        <position position="129"/>
    </location>
    <ligand>
        <name>carbamoyl phosphate</name>
        <dbReference type="ChEBI" id="CHEBI:58228"/>
    </ligand>
</feature>
<feature type="binding site" evidence="1">
    <location>
        <position position="159"/>
    </location>
    <ligand>
        <name>L-aspartate</name>
        <dbReference type="ChEBI" id="CHEBI:29991"/>
    </ligand>
</feature>
<feature type="binding site" evidence="1">
    <location>
        <position position="211"/>
    </location>
    <ligand>
        <name>L-aspartate</name>
        <dbReference type="ChEBI" id="CHEBI:29991"/>
    </ligand>
</feature>
<feature type="binding site" evidence="1">
    <location>
        <position position="252"/>
    </location>
    <ligand>
        <name>carbamoyl phosphate</name>
        <dbReference type="ChEBI" id="CHEBI:58228"/>
    </ligand>
</feature>
<feature type="binding site" evidence="1">
    <location>
        <position position="253"/>
    </location>
    <ligand>
        <name>carbamoyl phosphate</name>
        <dbReference type="ChEBI" id="CHEBI:58228"/>
    </ligand>
</feature>
<comment type="function">
    <text evidence="1">Catalyzes the condensation of carbamoyl phosphate and aspartate to form carbamoyl aspartate and inorganic phosphate, the committed step in the de novo pyrimidine nucleotide biosynthesis pathway.</text>
</comment>
<comment type="catalytic activity">
    <reaction evidence="1">
        <text>carbamoyl phosphate + L-aspartate = N-carbamoyl-L-aspartate + phosphate + H(+)</text>
        <dbReference type="Rhea" id="RHEA:20013"/>
        <dbReference type="ChEBI" id="CHEBI:15378"/>
        <dbReference type="ChEBI" id="CHEBI:29991"/>
        <dbReference type="ChEBI" id="CHEBI:32814"/>
        <dbReference type="ChEBI" id="CHEBI:43474"/>
        <dbReference type="ChEBI" id="CHEBI:58228"/>
        <dbReference type="EC" id="2.1.3.2"/>
    </reaction>
</comment>
<comment type="pathway">
    <text evidence="1">Pyrimidine metabolism; UMP biosynthesis via de novo pathway; (S)-dihydroorotate from bicarbonate: step 2/3.</text>
</comment>
<comment type="subunit">
    <text evidence="1">Heterododecamer (2C3:3R2) of six catalytic PyrB chains organized as two trimers (C3), and six regulatory PyrI chains organized as three dimers (R2).</text>
</comment>
<comment type="similarity">
    <text evidence="1">Belongs to the aspartate/ornithine carbamoyltransferase superfamily. ATCase family.</text>
</comment>
<keyword id="KW-0665">Pyrimidine biosynthesis</keyword>
<keyword id="KW-0808">Transferase</keyword>
<name>PYRB_LISIN</name>
<evidence type="ECO:0000255" key="1">
    <source>
        <dbReference type="HAMAP-Rule" id="MF_00001"/>
    </source>
</evidence>
<protein>
    <recommendedName>
        <fullName evidence="1">Aspartate carbamoyltransferase catalytic subunit</fullName>
        <ecNumber evidence="1">2.1.3.2</ecNumber>
    </recommendedName>
    <alternativeName>
        <fullName evidence="1">Aspartate transcarbamylase</fullName>
        <shortName evidence="1">ATCase</shortName>
    </alternativeName>
</protein>
<accession>Q92AH0</accession>
<proteinExistence type="inferred from homology"/>